<protein>
    <recommendedName>
        <fullName evidence="1">Keratin, type II cuticular Hb3</fullName>
    </recommendedName>
    <alternativeName>
        <fullName evidence="1">Keratin-83</fullName>
        <shortName>K83</shortName>
    </alternativeName>
    <alternativeName>
        <fullName>Type II hair keratin Hb3</fullName>
    </alternativeName>
    <alternativeName>
        <fullName>Type-II keratin Kb23</fullName>
    </alternativeName>
</protein>
<proteinExistence type="evidence at transcript level"/>
<gene>
    <name evidence="6" type="primary">KRT83</name>
</gene>
<comment type="subunit">
    <text evidence="5">Heterotetramer of two type I and two type II keratins.</text>
</comment>
<comment type="miscellaneous">
    <text evidence="5">There are two types of hair/microfibrillar keratin, I (acidic) and II (neutral to basic).</text>
</comment>
<comment type="similarity">
    <text evidence="4">Belongs to the intermediate filament family.</text>
</comment>
<reference evidence="6" key="1">
    <citation type="submission" date="2006-09" db="EMBL/GenBank/DDBJ databases">
        <authorList>
            <consortium name="NIH - Mammalian Gene Collection (MGC) project"/>
        </authorList>
    </citation>
    <scope>NUCLEOTIDE SEQUENCE [LARGE SCALE MRNA]</scope>
    <source>
        <strain evidence="6">Hereford</strain>
        <tissue evidence="6">Fetal skin</tissue>
    </source>
</reference>
<sequence>MTCGFSTVGSGFGSRAFSCVSACGPRPGRCCITAAPYRGISCYRGLTGGFGSRSVCGGFRAGYCSRSFGYRSGGVGGLSPPCITTVSVNESLLTPLNLEIDPNAQCVKQEEKEQIKCLNNRFAAFIDKVRFLEQQNKLLETKLQFYQNRQCCESNLEPLFEGYIETLRREAECVEADSGRLSSELNHVQEVLEGYKKKYEEEVALRATAENEFVALKKDVDCAYIRKSDLEANSEALIQEIDFLRRLYEEEIRVLQANISDTSVIVKMDNSRGLNMDNIVAEIKAQYDDIASRSRAEAESWYRSKCEEIKATVIRHGETLRRTKEEINELNRLIQRLTAEVENAKCQNSKLEAAVTQAEQQGEVALNDARCKLAGLEEALQKAKQDMACLLKEYQEVMNSKLGLDIEIATYRRLLEGEEQRLCEGVGAVNVCVSSSRGGVVCGDLCVSGSRPVTGSVCSAPCSGNLAVSTGLCAPCGQLNTTCGGGSCSLGRC</sequence>
<dbReference type="EMBL" id="BC123471">
    <property type="protein sequence ID" value="AAI23472.1"/>
    <property type="molecule type" value="mRNA"/>
</dbReference>
<dbReference type="RefSeq" id="NP_001076854.1">
    <property type="nucleotide sequence ID" value="NM_001083385.1"/>
</dbReference>
<dbReference type="SMR" id="A4FUZ0"/>
<dbReference type="FunCoup" id="A4FUZ0">
    <property type="interactions" value="17"/>
</dbReference>
<dbReference type="STRING" id="9913.ENSBTAP00000008857"/>
<dbReference type="PaxDb" id="9913-ENSBTAP00000008857"/>
<dbReference type="PeptideAtlas" id="A4FUZ0"/>
<dbReference type="Ensembl" id="ENSBTAT00000081840.2">
    <property type="protein sequence ID" value="ENSBTAP00000072104.2"/>
    <property type="gene ID" value="ENSBTAG00000007144.6"/>
</dbReference>
<dbReference type="GeneID" id="507421"/>
<dbReference type="KEGG" id="bta:507421"/>
<dbReference type="CTD" id="3889"/>
<dbReference type="VGNC" id="VGNC:50409">
    <property type="gene designation" value="KRT83"/>
</dbReference>
<dbReference type="eggNOG" id="ENOG502SKJW">
    <property type="taxonomic scope" value="Eukaryota"/>
</dbReference>
<dbReference type="GeneTree" id="ENSGT00940000154026"/>
<dbReference type="HOGENOM" id="CLU_012560_5_0_1"/>
<dbReference type="InParanoid" id="A4FUZ0"/>
<dbReference type="OrthoDB" id="2441647at2759"/>
<dbReference type="TreeFam" id="TF317854"/>
<dbReference type="Proteomes" id="UP000009136">
    <property type="component" value="Chromosome 5"/>
</dbReference>
<dbReference type="GO" id="GO:0045095">
    <property type="term" value="C:keratin filament"/>
    <property type="evidence" value="ECO:0000318"/>
    <property type="project" value="GO_Central"/>
</dbReference>
<dbReference type="GO" id="GO:0030280">
    <property type="term" value="F:structural constituent of skin epidermis"/>
    <property type="evidence" value="ECO:0000318"/>
    <property type="project" value="GO_Central"/>
</dbReference>
<dbReference type="GO" id="GO:0045109">
    <property type="term" value="P:intermediate filament organization"/>
    <property type="evidence" value="ECO:0000318"/>
    <property type="project" value="GO_Central"/>
</dbReference>
<dbReference type="GO" id="GO:0031424">
    <property type="term" value="P:keratinization"/>
    <property type="evidence" value="ECO:0000318"/>
    <property type="project" value="GO_Central"/>
</dbReference>
<dbReference type="FunFam" id="1.20.5.1160:FF:000001">
    <property type="entry name" value="Keratin type II"/>
    <property type="match status" value="1"/>
</dbReference>
<dbReference type="FunFam" id="1.20.5.170:FF:000004">
    <property type="entry name" value="Keratin, type II cytoskeletal 5"/>
    <property type="match status" value="1"/>
</dbReference>
<dbReference type="FunFam" id="1.20.5.500:FF:000001">
    <property type="entry name" value="Type II keratin 23"/>
    <property type="match status" value="1"/>
</dbReference>
<dbReference type="Gene3D" id="1.20.5.170">
    <property type="match status" value="1"/>
</dbReference>
<dbReference type="Gene3D" id="1.20.5.500">
    <property type="entry name" value="Single helix bin"/>
    <property type="match status" value="1"/>
</dbReference>
<dbReference type="Gene3D" id="1.20.5.1160">
    <property type="entry name" value="Vasodilator-stimulated phosphoprotein"/>
    <property type="match status" value="1"/>
</dbReference>
<dbReference type="InterPro" id="IPR018039">
    <property type="entry name" value="IF_conserved"/>
</dbReference>
<dbReference type="InterPro" id="IPR039008">
    <property type="entry name" value="IF_rod_dom"/>
</dbReference>
<dbReference type="InterPro" id="IPR032444">
    <property type="entry name" value="Keratin_2_head"/>
</dbReference>
<dbReference type="InterPro" id="IPR003054">
    <property type="entry name" value="Keratin_II"/>
</dbReference>
<dbReference type="PANTHER" id="PTHR45616">
    <property type="entry name" value="GATA-TYPE DOMAIN-CONTAINING PROTEIN"/>
    <property type="match status" value="1"/>
</dbReference>
<dbReference type="PANTHER" id="PTHR45616:SF52">
    <property type="entry name" value="KERATIN, TYPE II CUTICULAR HB3"/>
    <property type="match status" value="1"/>
</dbReference>
<dbReference type="Pfam" id="PF00038">
    <property type="entry name" value="Filament"/>
    <property type="match status" value="1"/>
</dbReference>
<dbReference type="Pfam" id="PF16208">
    <property type="entry name" value="Keratin_2_head"/>
    <property type="match status" value="1"/>
</dbReference>
<dbReference type="PRINTS" id="PR01276">
    <property type="entry name" value="TYPE2KERATIN"/>
</dbReference>
<dbReference type="SMART" id="SM01391">
    <property type="entry name" value="Filament"/>
    <property type="match status" value="1"/>
</dbReference>
<dbReference type="SUPFAM" id="SSF64593">
    <property type="entry name" value="Intermediate filament protein, coiled coil region"/>
    <property type="match status" value="2"/>
</dbReference>
<dbReference type="PROSITE" id="PS00226">
    <property type="entry name" value="IF_ROD_1"/>
    <property type="match status" value="1"/>
</dbReference>
<dbReference type="PROSITE" id="PS51842">
    <property type="entry name" value="IF_ROD_2"/>
    <property type="match status" value="1"/>
</dbReference>
<keyword id="KW-0175">Coiled coil</keyword>
<keyword id="KW-0403">Intermediate filament</keyword>
<keyword id="KW-1017">Isopeptide bond</keyword>
<keyword id="KW-0416">Keratin</keyword>
<keyword id="KW-1185">Reference proteome</keyword>
<keyword id="KW-0832">Ubl conjugation</keyword>
<feature type="chain" id="PRO_0000361691" description="Keratin, type II cuticular Hb3">
    <location>
        <begin position="1"/>
        <end position="493"/>
    </location>
</feature>
<feature type="domain" description="IF rod" evidence="4">
    <location>
        <begin position="111"/>
        <end position="422"/>
    </location>
</feature>
<feature type="region of interest" description="Head" evidence="3">
    <location>
        <begin position="1"/>
        <end position="111"/>
    </location>
</feature>
<feature type="region of interest" description="Coil 1A" evidence="3">
    <location>
        <begin position="112"/>
        <end position="146"/>
    </location>
</feature>
<feature type="region of interest" description="Linker 1" evidence="3">
    <location>
        <begin position="147"/>
        <end position="156"/>
    </location>
</feature>
<feature type="region of interest" description="Coil 1B" evidence="3">
    <location>
        <begin position="157"/>
        <end position="257"/>
    </location>
</feature>
<feature type="region of interest" description="Linker 12" evidence="3">
    <location>
        <begin position="258"/>
        <end position="274"/>
    </location>
</feature>
<feature type="region of interest" description="Coil 2" evidence="3">
    <location>
        <begin position="275"/>
        <end position="418"/>
    </location>
</feature>
<feature type="region of interest" description="Tail" evidence="3">
    <location>
        <begin position="419"/>
        <end position="493"/>
    </location>
</feature>
<feature type="cross-link" description="Glycyl lysine isopeptide (Lys-Gly) (interchain with G-Cter in SUMO1)" evidence="2">
    <location>
        <position position="217"/>
    </location>
</feature>
<evidence type="ECO:0000250" key="1">
    <source>
        <dbReference type="UniProtKB" id="P78385"/>
    </source>
</evidence>
<evidence type="ECO:0000250" key="2">
    <source>
        <dbReference type="UniProtKB" id="P78386"/>
    </source>
</evidence>
<evidence type="ECO:0000255" key="3"/>
<evidence type="ECO:0000255" key="4">
    <source>
        <dbReference type="PROSITE-ProRule" id="PRU01188"/>
    </source>
</evidence>
<evidence type="ECO:0000305" key="5"/>
<evidence type="ECO:0000312" key="6">
    <source>
        <dbReference type="EMBL" id="AAI23472.1"/>
    </source>
</evidence>
<name>KRT83_BOVIN</name>
<accession>A4FUZ0</accession>
<organism>
    <name type="scientific">Bos taurus</name>
    <name type="common">Bovine</name>
    <dbReference type="NCBI Taxonomy" id="9913"/>
    <lineage>
        <taxon>Eukaryota</taxon>
        <taxon>Metazoa</taxon>
        <taxon>Chordata</taxon>
        <taxon>Craniata</taxon>
        <taxon>Vertebrata</taxon>
        <taxon>Euteleostomi</taxon>
        <taxon>Mammalia</taxon>
        <taxon>Eutheria</taxon>
        <taxon>Laurasiatheria</taxon>
        <taxon>Artiodactyla</taxon>
        <taxon>Ruminantia</taxon>
        <taxon>Pecora</taxon>
        <taxon>Bovidae</taxon>
        <taxon>Bovinae</taxon>
        <taxon>Bos</taxon>
    </lineage>
</organism>